<protein>
    <recommendedName>
        <fullName>[PSI+] induction protein 2</fullName>
    </recommendedName>
</protein>
<feature type="chain" id="PRO_0000058442" description="[PSI+] induction protein 2">
    <location>
        <begin position="1"/>
        <end position="282"/>
    </location>
</feature>
<feature type="transmembrane region" description="Helical" evidence="1">
    <location>
        <begin position="43"/>
        <end position="63"/>
    </location>
</feature>
<feature type="region of interest" description="Disordered" evidence="2">
    <location>
        <begin position="153"/>
        <end position="183"/>
    </location>
</feature>
<feature type="region of interest" description="Disordered" evidence="2">
    <location>
        <begin position="246"/>
        <end position="282"/>
    </location>
</feature>
<feature type="compositionally biased region" description="Polar residues" evidence="2">
    <location>
        <begin position="253"/>
        <end position="282"/>
    </location>
</feature>
<feature type="modified residue" description="Phosphothreonine" evidence="5">
    <location>
        <position position="141"/>
    </location>
</feature>
<feature type="glycosylation site" description="N-linked (GlcNAc...) asparagine" evidence="1">
    <location>
        <position position="91"/>
    </location>
</feature>
<feature type="glycosylation site" description="N-linked (GlcNAc...) asparagine" evidence="1">
    <location>
        <position position="132"/>
    </location>
</feature>
<feature type="glycosylation site" description="N-linked (GlcNAc...) asparagine" evidence="1">
    <location>
        <position position="276"/>
    </location>
</feature>
<organism>
    <name type="scientific">Saccharomyces cerevisiae (strain ATCC 204508 / S288c)</name>
    <name type="common">Baker's yeast</name>
    <dbReference type="NCBI Taxonomy" id="559292"/>
    <lineage>
        <taxon>Eukaryota</taxon>
        <taxon>Fungi</taxon>
        <taxon>Dikarya</taxon>
        <taxon>Ascomycota</taxon>
        <taxon>Saccharomycotina</taxon>
        <taxon>Saccharomycetes</taxon>
        <taxon>Saccharomycetales</taxon>
        <taxon>Saccharomycetaceae</taxon>
        <taxon>Saccharomyces</taxon>
    </lineage>
</organism>
<gene>
    <name type="primary">PIN2</name>
    <name type="ordered locus">YOR104W</name>
    <name type="ORF">YOR3214W</name>
</gene>
<comment type="function">
    <text>Not known. Seems to be able to provoque the non-Mendelian trait [PIN(+)] which is required for the de novo appearance of the [PSI(+)] prion.</text>
</comment>
<comment type="subcellular location">
    <subcellularLocation>
        <location evidence="3">Membrane</location>
        <topology evidence="3">Single-pass membrane protein</topology>
    </subcellularLocation>
</comment>
<comment type="miscellaneous">
    <text evidence="4">Present with 996 molecules/cell in log phase SD medium.</text>
</comment>
<evidence type="ECO:0000255" key="1"/>
<evidence type="ECO:0000256" key="2">
    <source>
        <dbReference type="SAM" id="MobiDB-lite"/>
    </source>
</evidence>
<evidence type="ECO:0000269" key="3">
    <source>
    </source>
</evidence>
<evidence type="ECO:0000269" key="4">
    <source>
    </source>
</evidence>
<evidence type="ECO:0007744" key="5">
    <source>
    </source>
</evidence>
<name>PIN2_YEAST</name>
<keyword id="KW-0034">Amyloid</keyword>
<keyword id="KW-0325">Glycoprotein</keyword>
<keyword id="KW-0472">Membrane</keyword>
<keyword id="KW-0597">Phosphoprotein</keyword>
<keyword id="KW-0640">Prion</keyword>
<keyword id="KW-1185">Reference proteome</keyword>
<keyword id="KW-0812">Transmembrane</keyword>
<keyword id="KW-1133">Transmembrane helix</keyword>
<reference key="1">
    <citation type="journal article" date="1997" name="Yeast">
        <title>DNA sequencing and analysis of 130 kb from yeast chromosome XV.</title>
        <authorList>
            <person name="Voss H."/>
            <person name="Benes V."/>
            <person name="Andrade M.A."/>
            <person name="Valencia A."/>
            <person name="Rechmann S."/>
            <person name="Teodoru C."/>
            <person name="Schwager C."/>
            <person name="Paces V."/>
            <person name="Sander C."/>
            <person name="Ansorge W."/>
        </authorList>
    </citation>
    <scope>NUCLEOTIDE SEQUENCE [GENOMIC DNA]</scope>
</reference>
<reference key="2">
    <citation type="journal article" date="1997" name="Nature">
        <title>The nucleotide sequence of Saccharomyces cerevisiae chromosome XV.</title>
        <authorList>
            <person name="Dujon B."/>
            <person name="Albermann K."/>
            <person name="Aldea M."/>
            <person name="Alexandraki D."/>
            <person name="Ansorge W."/>
            <person name="Arino J."/>
            <person name="Benes V."/>
            <person name="Bohn C."/>
            <person name="Bolotin-Fukuhara M."/>
            <person name="Bordonne R."/>
            <person name="Boyer J."/>
            <person name="Camasses A."/>
            <person name="Casamayor A."/>
            <person name="Casas C."/>
            <person name="Cheret G."/>
            <person name="Cziepluch C."/>
            <person name="Daignan-Fornier B."/>
            <person name="Dang V.-D."/>
            <person name="de Haan M."/>
            <person name="Delius H."/>
            <person name="Durand P."/>
            <person name="Fairhead C."/>
            <person name="Feldmann H."/>
            <person name="Gaillon L."/>
            <person name="Galisson F."/>
            <person name="Gamo F.-J."/>
            <person name="Gancedo C."/>
            <person name="Goffeau A."/>
            <person name="Goulding S.E."/>
            <person name="Grivell L.A."/>
            <person name="Habbig B."/>
            <person name="Hand N.J."/>
            <person name="Hani J."/>
            <person name="Hattenhorst U."/>
            <person name="Hebling U."/>
            <person name="Hernando Y."/>
            <person name="Herrero E."/>
            <person name="Heumann K."/>
            <person name="Hiesel R."/>
            <person name="Hilger F."/>
            <person name="Hofmann B."/>
            <person name="Hollenberg C.P."/>
            <person name="Hughes B."/>
            <person name="Jauniaux J.-C."/>
            <person name="Kalogeropoulos A."/>
            <person name="Katsoulou C."/>
            <person name="Kordes E."/>
            <person name="Lafuente M.J."/>
            <person name="Landt O."/>
            <person name="Louis E.J."/>
            <person name="Maarse A.C."/>
            <person name="Madania A."/>
            <person name="Mannhaupt G."/>
            <person name="Marck C."/>
            <person name="Martin R.P."/>
            <person name="Mewes H.-W."/>
            <person name="Michaux G."/>
            <person name="Paces V."/>
            <person name="Parle-McDermott A.G."/>
            <person name="Pearson B.M."/>
            <person name="Perrin A."/>
            <person name="Pettersson B."/>
            <person name="Poch O."/>
            <person name="Pohl T.M."/>
            <person name="Poirey R."/>
            <person name="Portetelle D."/>
            <person name="Pujol A."/>
            <person name="Purnelle B."/>
            <person name="Ramezani Rad M."/>
            <person name="Rechmann S."/>
            <person name="Schwager C."/>
            <person name="Schweizer M."/>
            <person name="Sor F."/>
            <person name="Sterky F."/>
            <person name="Tarassov I.A."/>
            <person name="Teodoru C."/>
            <person name="Tettelin H."/>
            <person name="Thierry A."/>
            <person name="Tobiasch E."/>
            <person name="Tzermia M."/>
            <person name="Uhlen M."/>
            <person name="Unseld M."/>
            <person name="Valens M."/>
            <person name="Vandenbol M."/>
            <person name="Vetter I."/>
            <person name="Vlcek C."/>
            <person name="Voet M."/>
            <person name="Volckaert G."/>
            <person name="Voss H."/>
            <person name="Wambutt R."/>
            <person name="Wedler H."/>
            <person name="Wiemann S."/>
            <person name="Winsor B."/>
            <person name="Wolfe K.H."/>
            <person name="Zollner A."/>
            <person name="Zumstein E."/>
            <person name="Kleine K."/>
        </authorList>
    </citation>
    <scope>NUCLEOTIDE SEQUENCE [LARGE SCALE GENOMIC DNA]</scope>
    <source>
        <strain>ATCC 204508 / S288c</strain>
    </source>
</reference>
<reference key="3">
    <citation type="journal article" date="2014" name="G3 (Bethesda)">
        <title>The reference genome sequence of Saccharomyces cerevisiae: Then and now.</title>
        <authorList>
            <person name="Engel S.R."/>
            <person name="Dietrich F.S."/>
            <person name="Fisk D.G."/>
            <person name="Binkley G."/>
            <person name="Balakrishnan R."/>
            <person name="Costanzo M.C."/>
            <person name="Dwight S.S."/>
            <person name="Hitz B.C."/>
            <person name="Karra K."/>
            <person name="Nash R.S."/>
            <person name="Weng S."/>
            <person name="Wong E.D."/>
            <person name="Lloyd P."/>
            <person name="Skrzypek M.S."/>
            <person name="Miyasato S.R."/>
            <person name="Simison M."/>
            <person name="Cherry J.M."/>
        </authorList>
    </citation>
    <scope>GENOME REANNOTATION</scope>
    <source>
        <strain>ATCC 204508 / S288c</strain>
    </source>
</reference>
<reference key="4">
    <citation type="journal article" date="2007" name="Genome Res.">
        <title>Approaching a complete repository of sequence-verified protein-encoding clones for Saccharomyces cerevisiae.</title>
        <authorList>
            <person name="Hu Y."/>
            <person name="Rolfs A."/>
            <person name="Bhullar B."/>
            <person name="Murthy T.V.S."/>
            <person name="Zhu C."/>
            <person name="Berger M.F."/>
            <person name="Camargo A.A."/>
            <person name="Kelley F."/>
            <person name="McCarron S."/>
            <person name="Jepson D."/>
            <person name="Richardson A."/>
            <person name="Raphael J."/>
            <person name="Moreira D."/>
            <person name="Taycher E."/>
            <person name="Zuo D."/>
            <person name="Mohr S."/>
            <person name="Kane M.F."/>
            <person name="Williamson J."/>
            <person name="Simpson A.J.G."/>
            <person name="Bulyk M.L."/>
            <person name="Harlow E."/>
            <person name="Marsischky G."/>
            <person name="Kolodner R.D."/>
            <person name="LaBaer J."/>
        </authorList>
    </citation>
    <scope>NUCLEOTIDE SEQUENCE [GENOMIC DNA]</scope>
    <source>
        <strain>ATCC 204508 / S288c</strain>
    </source>
</reference>
<reference key="5">
    <citation type="journal article" date="2001" name="Cell">
        <title>Prions affect the appearance of other prions: the story of [PIN(+)].</title>
        <authorList>
            <person name="Derkatch I.L."/>
            <person name="Bradley M.E."/>
            <person name="Hong J.Y."/>
            <person name="Liebman S.W."/>
        </authorList>
    </citation>
    <scope>IDENTIFICATION</scope>
    <scope>PRION FORMATION</scope>
</reference>
<reference key="6">
    <citation type="journal article" date="2003" name="Nature">
        <title>Global analysis of protein localization in budding yeast.</title>
        <authorList>
            <person name="Huh W.-K."/>
            <person name="Falvo J.V."/>
            <person name="Gerke L.C."/>
            <person name="Carroll A.S."/>
            <person name="Howson R.W."/>
            <person name="Weissman J.S."/>
            <person name="O'Shea E.K."/>
        </authorList>
    </citation>
    <scope>SUBCELLULAR LOCATION [LARGE SCALE ANALYSIS]</scope>
</reference>
<reference key="7">
    <citation type="journal article" date="2003" name="Nature">
        <title>Global analysis of protein expression in yeast.</title>
        <authorList>
            <person name="Ghaemmaghami S."/>
            <person name="Huh W.-K."/>
            <person name="Bower K."/>
            <person name="Howson R.W."/>
            <person name="Belle A."/>
            <person name="Dephoure N."/>
            <person name="O'Shea E.K."/>
            <person name="Weissman J.S."/>
        </authorList>
    </citation>
    <scope>LEVEL OF PROTEIN EXPRESSION [LARGE SCALE ANALYSIS]</scope>
</reference>
<reference key="8">
    <citation type="journal article" date="2007" name="J. Proteome Res.">
        <title>Large-scale phosphorylation analysis of alpha-factor-arrested Saccharomyces cerevisiae.</title>
        <authorList>
            <person name="Li X."/>
            <person name="Gerber S.A."/>
            <person name="Rudner A.D."/>
            <person name="Beausoleil S.A."/>
            <person name="Haas W."/>
            <person name="Villen J."/>
            <person name="Elias J.E."/>
            <person name="Gygi S.P."/>
        </authorList>
    </citation>
    <scope>PHOSPHORYLATION [LARGE SCALE ANALYSIS] AT THR-141</scope>
    <scope>IDENTIFICATION BY MASS SPECTROMETRY [LARGE SCALE ANALYSIS]</scope>
    <source>
        <strain>ADR376</strain>
    </source>
</reference>
<accession>Q12057</accession>
<accession>D6W2G4</accession>
<sequence length="282" mass="32084">MNVCKLKEIVPLFPRSSFTDGVVSTGKSFRSWDTCMDNKACKIIAIVGIVLACILVIWLIGGLLTCFRQGVTGIGQFICWCCRCSNDRNGNNTMPVNEGFSRVNMGVAPPSTVIYQPIQQPESAYYRNDAKNDTFYDEVKTPSNEVYELEEDFDLEKQKEKTRKKQQKERNKEGRSPSRVAPLVYEEENFEGSSPQPQYDARNSFIQNAANTGSNNAHVASQSPIFDISDYGENYYYDNNNINNNLQGNSYNTPSSNHRSPYPTENYQSYQGYKPNQSDRYY</sequence>
<proteinExistence type="evidence at protein level"/>
<dbReference type="EMBL" id="X94335">
    <property type="protein sequence ID" value="CAA64025.1"/>
    <property type="molecule type" value="Genomic_DNA"/>
</dbReference>
<dbReference type="EMBL" id="Z75012">
    <property type="protein sequence ID" value="CAA99301.1"/>
    <property type="molecule type" value="Genomic_DNA"/>
</dbReference>
<dbReference type="EMBL" id="AY557759">
    <property type="protein sequence ID" value="AAS56085.1"/>
    <property type="molecule type" value="Genomic_DNA"/>
</dbReference>
<dbReference type="EMBL" id="BK006948">
    <property type="protein sequence ID" value="DAA10880.1"/>
    <property type="molecule type" value="Genomic_DNA"/>
</dbReference>
<dbReference type="PIR" id="S61663">
    <property type="entry name" value="S61663"/>
</dbReference>
<dbReference type="RefSeq" id="NP_014747.1">
    <property type="nucleotide sequence ID" value="NM_001183523.1"/>
</dbReference>
<dbReference type="SMR" id="Q12057"/>
<dbReference type="BioGRID" id="34501">
    <property type="interactions" value="103"/>
</dbReference>
<dbReference type="DIP" id="DIP-4459N"/>
<dbReference type="FunCoup" id="Q12057">
    <property type="interactions" value="45"/>
</dbReference>
<dbReference type="IntAct" id="Q12057">
    <property type="interactions" value="15"/>
</dbReference>
<dbReference type="MINT" id="Q12057"/>
<dbReference type="STRING" id="4932.YOR104W"/>
<dbReference type="GlyCosmos" id="Q12057">
    <property type="glycosylation" value="3 sites, No reported glycans"/>
</dbReference>
<dbReference type="GlyGen" id="Q12057">
    <property type="glycosylation" value="3 sites"/>
</dbReference>
<dbReference type="iPTMnet" id="Q12057"/>
<dbReference type="SwissPalm" id="Q12057"/>
<dbReference type="PaxDb" id="4932-YOR104W"/>
<dbReference type="PeptideAtlas" id="Q12057"/>
<dbReference type="EnsemblFungi" id="YOR104W_mRNA">
    <property type="protein sequence ID" value="YOR104W"/>
    <property type="gene ID" value="YOR104W"/>
</dbReference>
<dbReference type="GeneID" id="854271"/>
<dbReference type="KEGG" id="sce:YOR104W"/>
<dbReference type="AGR" id="SGD:S000005630"/>
<dbReference type="SGD" id="S000005630">
    <property type="gene designation" value="PIN2"/>
</dbReference>
<dbReference type="VEuPathDB" id="FungiDB:YOR104W"/>
<dbReference type="eggNOG" id="ENOG502S5JV">
    <property type="taxonomic scope" value="Eukaryota"/>
</dbReference>
<dbReference type="HOGENOM" id="CLU_077184_0_0_1"/>
<dbReference type="InParanoid" id="Q12057"/>
<dbReference type="OMA" id="ACILVIW"/>
<dbReference type="OrthoDB" id="3980401at2759"/>
<dbReference type="BioCyc" id="YEAST:G3O-33635-MONOMER"/>
<dbReference type="BioGRID-ORCS" id="854271">
    <property type="hits" value="0 hits in 10 CRISPR screens"/>
</dbReference>
<dbReference type="PRO" id="PR:Q12057"/>
<dbReference type="Proteomes" id="UP000002311">
    <property type="component" value="Chromosome XV"/>
</dbReference>
<dbReference type="RNAct" id="Q12057">
    <property type="molecule type" value="protein"/>
</dbReference>
<dbReference type="GO" id="GO:0005935">
    <property type="term" value="C:cellular bud neck"/>
    <property type="evidence" value="ECO:0000314"/>
    <property type="project" value="SGD"/>
</dbReference>
<dbReference type="GO" id="GO:0000329">
    <property type="term" value="C:fungal-type vacuole membrane"/>
    <property type="evidence" value="ECO:0007005"/>
    <property type="project" value="SGD"/>
</dbReference>
<dbReference type="GO" id="GO:0005886">
    <property type="term" value="C:plasma membrane"/>
    <property type="evidence" value="ECO:0000314"/>
    <property type="project" value="SGD"/>
</dbReference>
<dbReference type="InterPro" id="IPR037504">
    <property type="entry name" value="PSI_induc_2"/>
</dbReference>
<dbReference type="PANTHER" id="PTHR40018">
    <property type="entry name" value="[PSI+] INDUCTION PROTEIN 2"/>
    <property type="match status" value="1"/>
</dbReference>
<dbReference type="PANTHER" id="PTHR40018:SF1">
    <property type="entry name" value="[PSI+] INDUCTION PROTEIN 2"/>
    <property type="match status" value="1"/>
</dbReference>